<sequence length="239" mass="27048">MRTLFIGDLHLSADRLDITQAFNRFLDTELDDADALYILGDLFEVWVGDDLAAPFALELARKLNQVSQRLPIYFIHGNRDFMLGKQFADVAGMQMLPEVTCLDLYGVNTVILHGDSLCTLDKAYQRFRKLRSFAFARWLYSCLPKKKRQAIANKIRSNSQSSNQQKSYVIMDVEPSAVDALFAQSHCKQMIHGHTHRPAIHEFTNGCKRIVVGDWYEQGSVLVVSSDGVDLKSLPFDAS</sequence>
<keyword id="KW-0997">Cell inner membrane</keyword>
<keyword id="KW-1003">Cell membrane</keyword>
<keyword id="KW-0378">Hydrolase</keyword>
<keyword id="KW-0441">Lipid A biosynthesis</keyword>
<keyword id="KW-0444">Lipid biosynthesis</keyword>
<keyword id="KW-0443">Lipid metabolism</keyword>
<keyword id="KW-0464">Manganese</keyword>
<keyword id="KW-0472">Membrane</keyword>
<keyword id="KW-0479">Metal-binding</keyword>
<organism>
    <name type="scientific">Shewanella sp. (strain ANA-3)</name>
    <dbReference type="NCBI Taxonomy" id="94122"/>
    <lineage>
        <taxon>Bacteria</taxon>
        <taxon>Pseudomonadati</taxon>
        <taxon>Pseudomonadota</taxon>
        <taxon>Gammaproteobacteria</taxon>
        <taxon>Alteromonadales</taxon>
        <taxon>Shewanellaceae</taxon>
        <taxon>Shewanella</taxon>
    </lineage>
</organism>
<dbReference type="EC" id="3.6.1.54" evidence="1"/>
<dbReference type="EMBL" id="CP000469">
    <property type="protein sequence ID" value="ABK48893.1"/>
    <property type="molecule type" value="Genomic_DNA"/>
</dbReference>
<dbReference type="RefSeq" id="WP_011717553.1">
    <property type="nucleotide sequence ID" value="NC_008577.1"/>
</dbReference>
<dbReference type="SMR" id="A0KYM4"/>
<dbReference type="STRING" id="94122.Shewana3_2666"/>
<dbReference type="KEGG" id="shn:Shewana3_2666"/>
<dbReference type="eggNOG" id="COG2908">
    <property type="taxonomic scope" value="Bacteria"/>
</dbReference>
<dbReference type="HOGENOM" id="CLU_074586_0_0_6"/>
<dbReference type="OrthoDB" id="9783283at2"/>
<dbReference type="UniPathway" id="UPA00359">
    <property type="reaction ID" value="UER00480"/>
</dbReference>
<dbReference type="Proteomes" id="UP000002589">
    <property type="component" value="Chromosome"/>
</dbReference>
<dbReference type="GO" id="GO:0005737">
    <property type="term" value="C:cytoplasm"/>
    <property type="evidence" value="ECO:0007669"/>
    <property type="project" value="InterPro"/>
</dbReference>
<dbReference type="GO" id="GO:0019897">
    <property type="term" value="C:extrinsic component of plasma membrane"/>
    <property type="evidence" value="ECO:0007669"/>
    <property type="project" value="UniProtKB-UniRule"/>
</dbReference>
<dbReference type="GO" id="GO:0030145">
    <property type="term" value="F:manganese ion binding"/>
    <property type="evidence" value="ECO:0007669"/>
    <property type="project" value="UniProtKB-UniRule"/>
</dbReference>
<dbReference type="GO" id="GO:0008758">
    <property type="term" value="F:UDP-2,3-diacylglucosamine hydrolase activity"/>
    <property type="evidence" value="ECO:0007669"/>
    <property type="project" value="UniProtKB-UniRule"/>
</dbReference>
<dbReference type="GO" id="GO:0009245">
    <property type="term" value="P:lipid A biosynthetic process"/>
    <property type="evidence" value="ECO:0007669"/>
    <property type="project" value="UniProtKB-UniRule"/>
</dbReference>
<dbReference type="CDD" id="cd07398">
    <property type="entry name" value="MPP_YbbF-LpxH"/>
    <property type="match status" value="1"/>
</dbReference>
<dbReference type="Gene3D" id="3.60.21.10">
    <property type="match status" value="1"/>
</dbReference>
<dbReference type="HAMAP" id="MF_00575">
    <property type="entry name" value="LpxH"/>
    <property type="match status" value="1"/>
</dbReference>
<dbReference type="InterPro" id="IPR004843">
    <property type="entry name" value="Calcineurin-like_PHP_ApaH"/>
</dbReference>
<dbReference type="InterPro" id="IPR043461">
    <property type="entry name" value="LpxH-like"/>
</dbReference>
<dbReference type="InterPro" id="IPR029052">
    <property type="entry name" value="Metallo-depent_PP-like"/>
</dbReference>
<dbReference type="InterPro" id="IPR010138">
    <property type="entry name" value="UDP-diacylglucosamine_Hdrlase"/>
</dbReference>
<dbReference type="NCBIfam" id="TIGR01854">
    <property type="entry name" value="lipid_A_lpxH"/>
    <property type="match status" value="1"/>
</dbReference>
<dbReference type="NCBIfam" id="NF003743">
    <property type="entry name" value="PRK05340.1"/>
    <property type="match status" value="1"/>
</dbReference>
<dbReference type="PANTHER" id="PTHR34990:SF1">
    <property type="entry name" value="UDP-2,3-DIACYLGLUCOSAMINE HYDROLASE"/>
    <property type="match status" value="1"/>
</dbReference>
<dbReference type="PANTHER" id="PTHR34990">
    <property type="entry name" value="UDP-2,3-DIACYLGLUCOSAMINE HYDROLASE-RELATED"/>
    <property type="match status" value="1"/>
</dbReference>
<dbReference type="Pfam" id="PF00149">
    <property type="entry name" value="Metallophos"/>
    <property type="match status" value="1"/>
</dbReference>
<dbReference type="SUPFAM" id="SSF56300">
    <property type="entry name" value="Metallo-dependent phosphatases"/>
    <property type="match status" value="1"/>
</dbReference>
<comment type="function">
    <text evidence="1">Hydrolyzes the pyrophosphate bond of UDP-2,3-diacylglucosamine to yield 2,3-diacylglucosamine 1-phosphate (lipid X) and UMP by catalyzing the attack of water at the alpha-P atom. Involved in the biosynthesis of lipid A, a phosphorylated glycolipid that anchors the lipopolysaccharide to the outer membrane of the cell.</text>
</comment>
<comment type="catalytic activity">
    <reaction evidence="1">
        <text>UDP-2-N,3-O-bis[(3R)-3-hydroxytetradecanoyl]-alpha-D-glucosamine + H2O = 2-N,3-O-bis[(3R)-3-hydroxytetradecanoyl]-alpha-D-glucosaminyl 1-phosphate + UMP + 2 H(+)</text>
        <dbReference type="Rhea" id="RHEA:25213"/>
        <dbReference type="ChEBI" id="CHEBI:15377"/>
        <dbReference type="ChEBI" id="CHEBI:15378"/>
        <dbReference type="ChEBI" id="CHEBI:57865"/>
        <dbReference type="ChEBI" id="CHEBI:57957"/>
        <dbReference type="ChEBI" id="CHEBI:78847"/>
        <dbReference type="EC" id="3.6.1.54"/>
    </reaction>
</comment>
<comment type="cofactor">
    <cofactor evidence="1">
        <name>Mn(2+)</name>
        <dbReference type="ChEBI" id="CHEBI:29035"/>
    </cofactor>
    <text evidence="1">Binds 2 Mn(2+) ions per subunit in a binuclear metal center.</text>
</comment>
<comment type="pathway">
    <text evidence="1">Glycolipid biosynthesis; lipid IV(A) biosynthesis; lipid IV(A) from (3R)-3-hydroxytetradecanoyl-[acyl-carrier-protein] and UDP-N-acetyl-alpha-D-glucosamine: step 4/6.</text>
</comment>
<comment type="subcellular location">
    <subcellularLocation>
        <location evidence="1">Cell inner membrane</location>
        <topology evidence="1">Peripheral membrane protein</topology>
        <orientation evidence="1">Cytoplasmic side</orientation>
    </subcellularLocation>
</comment>
<comment type="similarity">
    <text evidence="1">Belongs to the LpxH family.</text>
</comment>
<evidence type="ECO:0000255" key="1">
    <source>
        <dbReference type="HAMAP-Rule" id="MF_00575"/>
    </source>
</evidence>
<protein>
    <recommendedName>
        <fullName evidence="1">UDP-2,3-diacylglucosamine hydrolase</fullName>
        <ecNumber evidence="1">3.6.1.54</ecNumber>
    </recommendedName>
    <alternativeName>
        <fullName evidence="1">UDP-2,3-diacylglucosamine diphosphatase</fullName>
    </alternativeName>
</protein>
<proteinExistence type="inferred from homology"/>
<reference key="1">
    <citation type="submission" date="2006-09" db="EMBL/GenBank/DDBJ databases">
        <title>Complete sequence of chromosome 1 of Shewanella sp. ANA-3.</title>
        <authorList>
            <person name="Copeland A."/>
            <person name="Lucas S."/>
            <person name="Lapidus A."/>
            <person name="Barry K."/>
            <person name="Detter J.C."/>
            <person name="Glavina del Rio T."/>
            <person name="Hammon N."/>
            <person name="Israni S."/>
            <person name="Dalin E."/>
            <person name="Tice H."/>
            <person name="Pitluck S."/>
            <person name="Chertkov O."/>
            <person name="Brettin T."/>
            <person name="Bruce D."/>
            <person name="Han C."/>
            <person name="Tapia R."/>
            <person name="Gilna P."/>
            <person name="Schmutz J."/>
            <person name="Larimer F."/>
            <person name="Land M."/>
            <person name="Hauser L."/>
            <person name="Kyrpides N."/>
            <person name="Kim E."/>
            <person name="Newman D."/>
            <person name="Salticov C."/>
            <person name="Konstantinidis K."/>
            <person name="Klappenback J."/>
            <person name="Tiedje J."/>
            <person name="Richardson P."/>
        </authorList>
    </citation>
    <scope>NUCLEOTIDE SEQUENCE [LARGE SCALE GENOMIC DNA]</scope>
    <source>
        <strain>ANA-3</strain>
    </source>
</reference>
<feature type="chain" id="PRO_1000025086" description="UDP-2,3-diacylglucosamine hydrolase">
    <location>
        <begin position="1"/>
        <end position="239"/>
    </location>
</feature>
<feature type="binding site" evidence="1">
    <location>
        <position position="8"/>
    </location>
    <ligand>
        <name>Mn(2+)</name>
        <dbReference type="ChEBI" id="CHEBI:29035"/>
        <label>1</label>
    </ligand>
</feature>
<feature type="binding site" evidence="1">
    <location>
        <position position="10"/>
    </location>
    <ligand>
        <name>Mn(2+)</name>
        <dbReference type="ChEBI" id="CHEBI:29035"/>
        <label>1</label>
    </ligand>
</feature>
<feature type="binding site" evidence="1">
    <location>
        <position position="41"/>
    </location>
    <ligand>
        <name>Mn(2+)</name>
        <dbReference type="ChEBI" id="CHEBI:29035"/>
        <label>1</label>
    </ligand>
</feature>
<feature type="binding site" evidence="1">
    <location>
        <position position="41"/>
    </location>
    <ligand>
        <name>Mn(2+)</name>
        <dbReference type="ChEBI" id="CHEBI:29035"/>
        <label>2</label>
    </ligand>
</feature>
<feature type="binding site" evidence="1">
    <location>
        <begin position="78"/>
        <end position="79"/>
    </location>
    <ligand>
        <name>substrate</name>
    </ligand>
</feature>
<feature type="binding site" evidence="1">
    <location>
        <position position="78"/>
    </location>
    <ligand>
        <name>Mn(2+)</name>
        <dbReference type="ChEBI" id="CHEBI:29035"/>
        <label>2</label>
    </ligand>
</feature>
<feature type="binding site" evidence="1">
    <location>
        <position position="113"/>
    </location>
    <ligand>
        <name>Mn(2+)</name>
        <dbReference type="ChEBI" id="CHEBI:29035"/>
        <label>2</label>
    </ligand>
</feature>
<feature type="binding site" evidence="1">
    <location>
        <position position="121"/>
    </location>
    <ligand>
        <name>substrate</name>
    </ligand>
</feature>
<feature type="binding site" evidence="1">
    <location>
        <position position="159"/>
    </location>
    <ligand>
        <name>substrate</name>
    </ligand>
</feature>
<feature type="binding site" evidence="1">
    <location>
        <position position="163"/>
    </location>
    <ligand>
        <name>substrate</name>
    </ligand>
</feature>
<feature type="binding site" evidence="1">
    <location>
        <position position="166"/>
    </location>
    <ligand>
        <name>substrate</name>
    </ligand>
</feature>
<feature type="binding site" evidence="1">
    <location>
        <position position="194"/>
    </location>
    <ligand>
        <name>Mn(2+)</name>
        <dbReference type="ChEBI" id="CHEBI:29035"/>
        <label>2</label>
    </ligand>
</feature>
<feature type="binding site" evidence="1">
    <location>
        <position position="194"/>
    </location>
    <ligand>
        <name>substrate</name>
    </ligand>
</feature>
<feature type="binding site" evidence="1">
    <location>
        <position position="196"/>
    </location>
    <ligand>
        <name>Mn(2+)</name>
        <dbReference type="ChEBI" id="CHEBI:29035"/>
        <label>1</label>
    </ligand>
</feature>
<accession>A0KYM4</accession>
<name>LPXH_SHESA</name>
<gene>
    <name evidence="1" type="primary">lpxH</name>
    <name type="ordered locus">Shewana3_2666</name>
</gene>